<dbReference type="EMBL" id="AK037160">
    <property type="protein sequence ID" value="BAC29726.1"/>
    <property type="molecule type" value="mRNA"/>
</dbReference>
<dbReference type="CCDS" id="CCDS26147.1"/>
<dbReference type="RefSeq" id="NP_766612.1">
    <property type="nucleotide sequence ID" value="NM_173024.3"/>
</dbReference>
<dbReference type="SMR" id="Q8BYY9"/>
<dbReference type="FunCoup" id="Q8BYY9">
    <property type="interactions" value="340"/>
</dbReference>
<dbReference type="STRING" id="10090.ENSMUSP00000082127"/>
<dbReference type="MEROPS" id="I04.056"/>
<dbReference type="GlyCosmos" id="Q8BYY9">
    <property type="glycosylation" value="2 sites, No reported glycans"/>
</dbReference>
<dbReference type="GlyGen" id="Q8BYY9">
    <property type="glycosylation" value="2 sites"/>
</dbReference>
<dbReference type="iPTMnet" id="Q8BYY9"/>
<dbReference type="PhosphoSitePlus" id="Q8BYY9"/>
<dbReference type="PaxDb" id="10090-ENSMUSP00000082127"/>
<dbReference type="ProteomicsDB" id="257295"/>
<dbReference type="DNASU" id="271047"/>
<dbReference type="Ensembl" id="ENSMUST00000085052.3">
    <property type="protein sequence ID" value="ENSMUSP00000082127.3"/>
    <property type="gene ID" value="ENSMUSG00000066364.3"/>
</dbReference>
<dbReference type="GeneID" id="271047"/>
<dbReference type="KEGG" id="mmu:271047"/>
<dbReference type="UCSC" id="uc007owu.1">
    <property type="organism name" value="mouse"/>
</dbReference>
<dbReference type="AGR" id="MGI:2182835"/>
<dbReference type="CTD" id="271047"/>
<dbReference type="MGI" id="MGI:2182835">
    <property type="gene designation" value="Serpina3b"/>
</dbReference>
<dbReference type="VEuPathDB" id="HostDB:ENSMUSG00000066364"/>
<dbReference type="eggNOG" id="KOG2392">
    <property type="taxonomic scope" value="Eukaryota"/>
</dbReference>
<dbReference type="GeneTree" id="ENSGT00940000154392"/>
<dbReference type="HOGENOM" id="CLU_023330_2_1_1"/>
<dbReference type="InParanoid" id="Q8BYY9"/>
<dbReference type="OMA" id="ANGICFR"/>
<dbReference type="OrthoDB" id="671595at2759"/>
<dbReference type="PhylomeDB" id="Q8BYY9"/>
<dbReference type="TreeFam" id="TF343201"/>
<dbReference type="BioGRID-ORCS" id="271047">
    <property type="hits" value="1 hit in 77 CRISPR screens"/>
</dbReference>
<dbReference type="PRO" id="PR:Q8BYY9"/>
<dbReference type="Proteomes" id="UP000000589">
    <property type="component" value="Chromosome 12"/>
</dbReference>
<dbReference type="RNAct" id="Q8BYY9">
    <property type="molecule type" value="protein"/>
</dbReference>
<dbReference type="Bgee" id="ENSMUSG00000066364">
    <property type="expression patterns" value="Expressed in zone of skin and 13 other cell types or tissues"/>
</dbReference>
<dbReference type="ExpressionAtlas" id="Q8BYY9">
    <property type="expression patterns" value="baseline and differential"/>
</dbReference>
<dbReference type="GO" id="GO:0005615">
    <property type="term" value="C:extracellular space"/>
    <property type="evidence" value="ECO:0007669"/>
    <property type="project" value="InterPro"/>
</dbReference>
<dbReference type="GO" id="GO:0004867">
    <property type="term" value="F:serine-type endopeptidase inhibitor activity"/>
    <property type="evidence" value="ECO:0007669"/>
    <property type="project" value="UniProtKB-KW"/>
</dbReference>
<dbReference type="CDD" id="cd19551">
    <property type="entry name" value="serpinA3_A1AC"/>
    <property type="match status" value="1"/>
</dbReference>
<dbReference type="FunFam" id="3.30.497.10:FF:000001">
    <property type="entry name" value="Serine protease inhibitor"/>
    <property type="match status" value="1"/>
</dbReference>
<dbReference type="FunFam" id="2.30.39.10:FF:000002">
    <property type="entry name" value="Serpin family D member 1"/>
    <property type="match status" value="1"/>
</dbReference>
<dbReference type="Gene3D" id="2.30.39.10">
    <property type="entry name" value="Alpha-1-antitrypsin, domain 1"/>
    <property type="match status" value="1"/>
</dbReference>
<dbReference type="Gene3D" id="3.30.497.10">
    <property type="entry name" value="Antithrombin, subunit I, domain 2"/>
    <property type="match status" value="1"/>
</dbReference>
<dbReference type="InterPro" id="IPR023796">
    <property type="entry name" value="Serpin_dom"/>
</dbReference>
<dbReference type="InterPro" id="IPR000215">
    <property type="entry name" value="Serpin_fam"/>
</dbReference>
<dbReference type="InterPro" id="IPR036186">
    <property type="entry name" value="Serpin_sf"/>
</dbReference>
<dbReference type="InterPro" id="IPR042178">
    <property type="entry name" value="Serpin_sf_1"/>
</dbReference>
<dbReference type="InterPro" id="IPR042185">
    <property type="entry name" value="Serpin_sf_2"/>
</dbReference>
<dbReference type="PANTHER" id="PTHR11461:SF122">
    <property type="entry name" value="SERINE (OR CYSTEINE) PEPTIDASE INHIBITOR, CLADE A (ALPHA-1 ANTIPROTEINASE, ANTITRYPSIN), MEMBER 3J-RELATED"/>
    <property type="match status" value="1"/>
</dbReference>
<dbReference type="PANTHER" id="PTHR11461">
    <property type="entry name" value="SERINE PROTEASE INHIBITOR, SERPIN"/>
    <property type="match status" value="1"/>
</dbReference>
<dbReference type="Pfam" id="PF00079">
    <property type="entry name" value="Serpin"/>
    <property type="match status" value="1"/>
</dbReference>
<dbReference type="SMART" id="SM00093">
    <property type="entry name" value="SERPIN"/>
    <property type="match status" value="1"/>
</dbReference>
<dbReference type="SUPFAM" id="SSF56574">
    <property type="entry name" value="Serpins"/>
    <property type="match status" value="1"/>
</dbReference>
<sequence>MAFIAALGLLMAEICPAVICCSDGTLGMHNAVQKGQDTQKQLDSLTLASINTDFAFSFYKELALKNPHKNIAFSPFGIATALNSLTLGAKGNTLEEILEVLKFNLTETSEADIHQGFKHLLQRLSHPGDQVQIRTGNALFVEKHLQILAEFKEKARALYHTEVFTANFQQPHEAMKLINSYMSNQTQGKIKELVSDMDGNTSMVIVNDLFFKAEWMVPFNSDDTFMGKFIVDRSRHVKVPMMKTKNLRTPYFRDEELKCTVVELNYKGNGKAMFILPDQGKMQQVEASLQPGTLKKWRKSLRPRKIKELHLPKFSLSQHYNLEDILPELGIRELFSTQADLSGITGVKNITVSEMIHSTELDMTEKGTEGDAITIVGYNFMSAKLKPVFVKFEDQFLYIVLDQGDLWIHVMGKVINPSEK</sequence>
<accession>Q8BYY9</accession>
<keyword id="KW-0325">Glycoprotein</keyword>
<keyword id="KW-0646">Protease inhibitor</keyword>
<keyword id="KW-1185">Reference proteome</keyword>
<keyword id="KW-0964">Secreted</keyword>
<keyword id="KW-0722">Serine protease inhibitor</keyword>
<keyword id="KW-0732">Signal</keyword>
<gene>
    <name type="primary">Serpina3b</name>
</gene>
<name>SPA3B_MOUSE</name>
<evidence type="ECO:0000250" key="1"/>
<evidence type="ECO:0000255" key="2"/>
<evidence type="ECO:0000305" key="3"/>
<proteinExistence type="evidence at transcript level"/>
<feature type="signal peptide" evidence="2">
    <location>
        <begin position="1"/>
        <end position="17"/>
    </location>
</feature>
<feature type="chain" id="PRO_0000032415" description="Serine protease inhibitor A3B">
    <location>
        <begin position="18"/>
        <end position="420"/>
    </location>
</feature>
<feature type="region of interest" description="RCL">
    <location>
        <begin position="367"/>
        <end position="392"/>
    </location>
</feature>
<feature type="site" description="Reactive bond" evidence="1">
    <location>
        <begin position="381"/>
        <end position="382"/>
    </location>
</feature>
<feature type="glycosylation site" description="N-linked (GlcNAc...) asparagine" evidence="2">
    <location>
        <position position="104"/>
    </location>
</feature>
<feature type="glycosylation site" description="N-linked (GlcNAc...) asparagine" evidence="2">
    <location>
        <position position="349"/>
    </location>
</feature>
<organism>
    <name type="scientific">Mus musculus</name>
    <name type="common">Mouse</name>
    <dbReference type="NCBI Taxonomy" id="10090"/>
    <lineage>
        <taxon>Eukaryota</taxon>
        <taxon>Metazoa</taxon>
        <taxon>Chordata</taxon>
        <taxon>Craniata</taxon>
        <taxon>Vertebrata</taxon>
        <taxon>Euteleostomi</taxon>
        <taxon>Mammalia</taxon>
        <taxon>Eutheria</taxon>
        <taxon>Euarchontoglires</taxon>
        <taxon>Glires</taxon>
        <taxon>Rodentia</taxon>
        <taxon>Myomorpha</taxon>
        <taxon>Muroidea</taxon>
        <taxon>Muridae</taxon>
        <taxon>Murinae</taxon>
        <taxon>Mus</taxon>
        <taxon>Mus</taxon>
    </lineage>
</organism>
<reference key="1">
    <citation type="journal article" date="2005" name="Science">
        <title>The transcriptional landscape of the mammalian genome.</title>
        <authorList>
            <person name="Carninci P."/>
            <person name="Kasukawa T."/>
            <person name="Katayama S."/>
            <person name="Gough J."/>
            <person name="Frith M.C."/>
            <person name="Maeda N."/>
            <person name="Oyama R."/>
            <person name="Ravasi T."/>
            <person name="Lenhard B."/>
            <person name="Wells C."/>
            <person name="Kodzius R."/>
            <person name="Shimokawa K."/>
            <person name="Bajic V.B."/>
            <person name="Brenner S.E."/>
            <person name="Batalov S."/>
            <person name="Forrest A.R."/>
            <person name="Zavolan M."/>
            <person name="Davis M.J."/>
            <person name="Wilming L.G."/>
            <person name="Aidinis V."/>
            <person name="Allen J.E."/>
            <person name="Ambesi-Impiombato A."/>
            <person name="Apweiler R."/>
            <person name="Aturaliya R.N."/>
            <person name="Bailey T.L."/>
            <person name="Bansal M."/>
            <person name="Baxter L."/>
            <person name="Beisel K.W."/>
            <person name="Bersano T."/>
            <person name="Bono H."/>
            <person name="Chalk A.M."/>
            <person name="Chiu K.P."/>
            <person name="Choudhary V."/>
            <person name="Christoffels A."/>
            <person name="Clutterbuck D.R."/>
            <person name="Crowe M.L."/>
            <person name="Dalla E."/>
            <person name="Dalrymple B.P."/>
            <person name="de Bono B."/>
            <person name="Della Gatta G."/>
            <person name="di Bernardo D."/>
            <person name="Down T."/>
            <person name="Engstrom P."/>
            <person name="Fagiolini M."/>
            <person name="Faulkner G."/>
            <person name="Fletcher C.F."/>
            <person name="Fukushima T."/>
            <person name="Furuno M."/>
            <person name="Futaki S."/>
            <person name="Gariboldi M."/>
            <person name="Georgii-Hemming P."/>
            <person name="Gingeras T.R."/>
            <person name="Gojobori T."/>
            <person name="Green R.E."/>
            <person name="Gustincich S."/>
            <person name="Harbers M."/>
            <person name="Hayashi Y."/>
            <person name="Hensch T.K."/>
            <person name="Hirokawa N."/>
            <person name="Hill D."/>
            <person name="Huminiecki L."/>
            <person name="Iacono M."/>
            <person name="Ikeo K."/>
            <person name="Iwama A."/>
            <person name="Ishikawa T."/>
            <person name="Jakt M."/>
            <person name="Kanapin A."/>
            <person name="Katoh M."/>
            <person name="Kawasawa Y."/>
            <person name="Kelso J."/>
            <person name="Kitamura H."/>
            <person name="Kitano H."/>
            <person name="Kollias G."/>
            <person name="Krishnan S.P."/>
            <person name="Kruger A."/>
            <person name="Kummerfeld S.K."/>
            <person name="Kurochkin I.V."/>
            <person name="Lareau L.F."/>
            <person name="Lazarevic D."/>
            <person name="Lipovich L."/>
            <person name="Liu J."/>
            <person name="Liuni S."/>
            <person name="McWilliam S."/>
            <person name="Madan Babu M."/>
            <person name="Madera M."/>
            <person name="Marchionni L."/>
            <person name="Matsuda H."/>
            <person name="Matsuzawa S."/>
            <person name="Miki H."/>
            <person name="Mignone F."/>
            <person name="Miyake S."/>
            <person name="Morris K."/>
            <person name="Mottagui-Tabar S."/>
            <person name="Mulder N."/>
            <person name="Nakano N."/>
            <person name="Nakauchi H."/>
            <person name="Ng P."/>
            <person name="Nilsson R."/>
            <person name="Nishiguchi S."/>
            <person name="Nishikawa S."/>
            <person name="Nori F."/>
            <person name="Ohara O."/>
            <person name="Okazaki Y."/>
            <person name="Orlando V."/>
            <person name="Pang K.C."/>
            <person name="Pavan W.J."/>
            <person name="Pavesi G."/>
            <person name="Pesole G."/>
            <person name="Petrovsky N."/>
            <person name="Piazza S."/>
            <person name="Reed J."/>
            <person name="Reid J.F."/>
            <person name="Ring B.Z."/>
            <person name="Ringwald M."/>
            <person name="Rost B."/>
            <person name="Ruan Y."/>
            <person name="Salzberg S.L."/>
            <person name="Sandelin A."/>
            <person name="Schneider C."/>
            <person name="Schoenbach C."/>
            <person name="Sekiguchi K."/>
            <person name="Semple C.A."/>
            <person name="Seno S."/>
            <person name="Sessa L."/>
            <person name="Sheng Y."/>
            <person name="Shibata Y."/>
            <person name="Shimada H."/>
            <person name="Shimada K."/>
            <person name="Silva D."/>
            <person name="Sinclair B."/>
            <person name="Sperling S."/>
            <person name="Stupka E."/>
            <person name="Sugiura K."/>
            <person name="Sultana R."/>
            <person name="Takenaka Y."/>
            <person name="Taki K."/>
            <person name="Tammoja K."/>
            <person name="Tan S.L."/>
            <person name="Tang S."/>
            <person name="Taylor M.S."/>
            <person name="Tegner J."/>
            <person name="Teichmann S.A."/>
            <person name="Ueda H.R."/>
            <person name="van Nimwegen E."/>
            <person name="Verardo R."/>
            <person name="Wei C.L."/>
            <person name="Yagi K."/>
            <person name="Yamanishi H."/>
            <person name="Zabarovsky E."/>
            <person name="Zhu S."/>
            <person name="Zimmer A."/>
            <person name="Hide W."/>
            <person name="Bult C."/>
            <person name="Grimmond S.M."/>
            <person name="Teasdale R.D."/>
            <person name="Liu E.T."/>
            <person name="Brusic V."/>
            <person name="Quackenbush J."/>
            <person name="Wahlestedt C."/>
            <person name="Mattick J.S."/>
            <person name="Hume D.A."/>
            <person name="Kai C."/>
            <person name="Sasaki D."/>
            <person name="Tomaru Y."/>
            <person name="Fukuda S."/>
            <person name="Kanamori-Katayama M."/>
            <person name="Suzuki M."/>
            <person name="Aoki J."/>
            <person name="Arakawa T."/>
            <person name="Iida J."/>
            <person name="Imamura K."/>
            <person name="Itoh M."/>
            <person name="Kato T."/>
            <person name="Kawaji H."/>
            <person name="Kawagashira N."/>
            <person name="Kawashima T."/>
            <person name="Kojima M."/>
            <person name="Kondo S."/>
            <person name="Konno H."/>
            <person name="Nakano K."/>
            <person name="Ninomiya N."/>
            <person name="Nishio T."/>
            <person name="Okada M."/>
            <person name="Plessy C."/>
            <person name="Shibata K."/>
            <person name="Shiraki T."/>
            <person name="Suzuki S."/>
            <person name="Tagami M."/>
            <person name="Waki K."/>
            <person name="Watahiki A."/>
            <person name="Okamura-Oho Y."/>
            <person name="Suzuki H."/>
            <person name="Kawai J."/>
            <person name="Hayashizaki Y."/>
        </authorList>
    </citation>
    <scope>NUCLEOTIDE SEQUENCE [LARGE SCALE MRNA]</scope>
    <source>
        <strain>C57BL/6J</strain>
        <tissue>Skin</tissue>
    </source>
</reference>
<reference key="2">
    <citation type="journal article" date="2003" name="Genomics">
        <title>A review and comparison of the murine alpha1-antitrypsin and alpha1-antichymotrypsin multigene clusters with the human clade A serpins.</title>
        <authorList>
            <person name="Forsyth S."/>
            <person name="Horvath A."/>
            <person name="Coughlin P."/>
        </authorList>
    </citation>
    <scope>GENE FAMILY</scope>
    <scope>NOMENCLATURE</scope>
</reference>
<reference key="3">
    <citation type="journal article" date="2004" name="J. Mol. Evol.">
        <title>Expression patterns of murine antichymotrypsin-like genes reflect evolutionary divergence at the Serpina3 locus.</title>
        <authorList>
            <person name="Horvath A.J."/>
            <person name="Forsyth S.L."/>
            <person name="Coughlin P.B."/>
        </authorList>
    </citation>
    <scope>REGION RCL</scope>
</reference>
<protein>
    <recommendedName>
        <fullName>Serine protease inhibitor A3B</fullName>
        <shortName>Serpin A3B</shortName>
    </recommendedName>
</protein>
<comment type="subcellular location">
    <subcellularLocation>
        <location evidence="1">Secreted</location>
    </subcellularLocation>
</comment>
<comment type="domain">
    <text evidence="1">The reactive center loop (RCL) extends out from the body of the protein and directs binding to the target protease. The protease cleaves the serpin at the reactive site within the RCL, establishing a covalent linkage between the serpin reactive site and the protease. The resulting inactive serpin-protease complex is highly stable (By similarity). Variability within the reactive center loop (RCL) sequences of Serpina3 paralogs may determine target protease specificity.</text>
</comment>
<comment type="miscellaneous">
    <text>The single human alpha1-antichymotrypsin gene (SERPINA3) is represented by a cluster of 14 individual murine paralogs.</text>
</comment>
<comment type="similarity">
    <text evidence="3">Belongs to the serpin family.</text>
</comment>